<name>Y445_BACCZ</name>
<dbReference type="EMBL" id="CP000001">
    <property type="protein sequence ID" value="AAU19793.1"/>
    <property type="molecule type" value="Genomic_DNA"/>
</dbReference>
<dbReference type="RefSeq" id="WP_000025062.1">
    <property type="nucleotide sequence ID" value="NZ_CP009968.1"/>
</dbReference>
<dbReference type="SMR" id="Q63GA7"/>
<dbReference type="KEGG" id="bcz:BCE33L0445"/>
<dbReference type="PATRIC" id="fig|288681.22.peg.5153"/>
<dbReference type="Proteomes" id="UP000002612">
    <property type="component" value="Chromosome"/>
</dbReference>
<dbReference type="GO" id="GO:0005886">
    <property type="term" value="C:plasma membrane"/>
    <property type="evidence" value="ECO:0007669"/>
    <property type="project" value="UniProtKB-SubCell"/>
</dbReference>
<dbReference type="HAMAP" id="MF_01502">
    <property type="entry name" value="UPF0295"/>
    <property type="match status" value="1"/>
</dbReference>
<dbReference type="InterPro" id="IPR020912">
    <property type="entry name" value="UPF0295"/>
</dbReference>
<dbReference type="NCBIfam" id="NF002796">
    <property type="entry name" value="PRK02935.1"/>
    <property type="match status" value="1"/>
</dbReference>
<dbReference type="Pfam" id="PF11023">
    <property type="entry name" value="DUF2614"/>
    <property type="match status" value="1"/>
</dbReference>
<comment type="subcellular location">
    <subcellularLocation>
        <location evidence="1">Cell membrane</location>
        <topology evidence="1">Multi-pass membrane protein</topology>
    </subcellularLocation>
</comment>
<comment type="similarity">
    <text evidence="1">Belongs to the UPF0295 family.</text>
</comment>
<protein>
    <recommendedName>
        <fullName evidence="1">UPF0295 protein BCE33L0445</fullName>
    </recommendedName>
</protein>
<feature type="chain" id="PRO_0000053850" description="UPF0295 protein BCE33L0445">
    <location>
        <begin position="1"/>
        <end position="118"/>
    </location>
</feature>
<feature type="transmembrane region" description="Helical" evidence="1">
    <location>
        <begin position="12"/>
        <end position="32"/>
    </location>
</feature>
<feature type="transmembrane region" description="Helical" evidence="1">
    <location>
        <begin position="43"/>
        <end position="63"/>
    </location>
</feature>
<sequence length="118" mass="13544">MSIKYSNKINKIRTFALSLVFIGLFIAYLGVFFRENIIIMTTFMMVGFLAVIASTVVYFWIGMLSTKTVQIICPSCDKPTKMLGRVDACMHCNQPLTMDRNLEGKEFDEKYNKKSYKA</sequence>
<gene>
    <name type="ordered locus">BCE33L0445</name>
</gene>
<keyword id="KW-1003">Cell membrane</keyword>
<keyword id="KW-0472">Membrane</keyword>
<keyword id="KW-0812">Transmembrane</keyword>
<keyword id="KW-1133">Transmembrane helix</keyword>
<organism>
    <name type="scientific">Bacillus cereus (strain ZK / E33L)</name>
    <dbReference type="NCBI Taxonomy" id="288681"/>
    <lineage>
        <taxon>Bacteria</taxon>
        <taxon>Bacillati</taxon>
        <taxon>Bacillota</taxon>
        <taxon>Bacilli</taxon>
        <taxon>Bacillales</taxon>
        <taxon>Bacillaceae</taxon>
        <taxon>Bacillus</taxon>
        <taxon>Bacillus cereus group</taxon>
    </lineage>
</organism>
<evidence type="ECO:0000255" key="1">
    <source>
        <dbReference type="HAMAP-Rule" id="MF_01502"/>
    </source>
</evidence>
<proteinExistence type="inferred from homology"/>
<accession>Q63GA7</accession>
<reference key="1">
    <citation type="journal article" date="2006" name="J. Bacteriol.">
        <title>Pathogenomic sequence analysis of Bacillus cereus and Bacillus thuringiensis isolates closely related to Bacillus anthracis.</title>
        <authorList>
            <person name="Han C.S."/>
            <person name="Xie G."/>
            <person name="Challacombe J.F."/>
            <person name="Altherr M.R."/>
            <person name="Bhotika S.S."/>
            <person name="Bruce D."/>
            <person name="Campbell C.S."/>
            <person name="Campbell M.L."/>
            <person name="Chen J."/>
            <person name="Chertkov O."/>
            <person name="Cleland C."/>
            <person name="Dimitrijevic M."/>
            <person name="Doggett N.A."/>
            <person name="Fawcett J.J."/>
            <person name="Glavina T."/>
            <person name="Goodwin L.A."/>
            <person name="Hill K.K."/>
            <person name="Hitchcock P."/>
            <person name="Jackson P.J."/>
            <person name="Keim P."/>
            <person name="Kewalramani A.R."/>
            <person name="Longmire J."/>
            <person name="Lucas S."/>
            <person name="Malfatti S."/>
            <person name="McMurry K."/>
            <person name="Meincke L.J."/>
            <person name="Misra M."/>
            <person name="Moseman B.L."/>
            <person name="Mundt M."/>
            <person name="Munk A.C."/>
            <person name="Okinaka R.T."/>
            <person name="Parson-Quintana B."/>
            <person name="Reilly L.P."/>
            <person name="Richardson P."/>
            <person name="Robinson D.L."/>
            <person name="Rubin E."/>
            <person name="Saunders E."/>
            <person name="Tapia R."/>
            <person name="Tesmer J.G."/>
            <person name="Thayer N."/>
            <person name="Thompson L.S."/>
            <person name="Tice H."/>
            <person name="Ticknor L.O."/>
            <person name="Wills P.L."/>
            <person name="Brettin T.S."/>
            <person name="Gilna P."/>
        </authorList>
    </citation>
    <scope>NUCLEOTIDE SEQUENCE [LARGE SCALE GENOMIC DNA]</scope>
    <source>
        <strain>ZK / E33L</strain>
    </source>
</reference>